<keyword id="KW-0687">Ribonucleoprotein</keyword>
<keyword id="KW-0689">Ribosomal protein</keyword>
<reference key="1">
    <citation type="journal article" date="2009" name="Proc. Natl. Acad. Sci. U.S.A.">
        <title>The mosaic genome structure of the Wolbachia wRi strain infecting Drosophila simulans.</title>
        <authorList>
            <person name="Klasson L."/>
            <person name="Westberg J."/>
            <person name="Sapountzis P."/>
            <person name="Naeslund K."/>
            <person name="Lutnaes Y."/>
            <person name="Darby A.C."/>
            <person name="Veneti Z."/>
            <person name="Chen L."/>
            <person name="Braig H.R."/>
            <person name="Garrett R."/>
            <person name="Bourtzis K."/>
            <person name="Andersson S.G."/>
        </authorList>
    </citation>
    <scope>NUCLEOTIDE SEQUENCE [LARGE SCALE GENOMIC DNA]</scope>
    <source>
        <strain>wRi</strain>
    </source>
</reference>
<evidence type="ECO:0000255" key="1">
    <source>
        <dbReference type="HAMAP-Rule" id="MF_00514"/>
    </source>
</evidence>
<evidence type="ECO:0000305" key="2"/>
<organism>
    <name type="scientific">Wolbachia sp. subsp. Drosophila simulans (strain wRi)</name>
    <dbReference type="NCBI Taxonomy" id="66084"/>
    <lineage>
        <taxon>Bacteria</taxon>
        <taxon>Pseudomonadati</taxon>
        <taxon>Pseudomonadota</taxon>
        <taxon>Alphaproteobacteria</taxon>
        <taxon>Rickettsiales</taxon>
        <taxon>Anaplasmataceae</taxon>
        <taxon>Wolbachieae</taxon>
        <taxon>Wolbachia</taxon>
    </lineage>
</organism>
<accession>C0R3S5</accession>
<proteinExistence type="inferred from homology"/>
<gene>
    <name evidence="1" type="primary">rpmI</name>
    <name type="ordered locus">WRi_008280</name>
</gene>
<protein>
    <recommendedName>
        <fullName evidence="1">Large ribosomal subunit protein bL35</fullName>
    </recommendedName>
    <alternativeName>
        <fullName evidence="2">50S ribosomal protein L35</fullName>
    </alternativeName>
</protein>
<dbReference type="EMBL" id="CP001391">
    <property type="protein sequence ID" value="ACN95567.1"/>
    <property type="molecule type" value="Genomic_DNA"/>
</dbReference>
<dbReference type="RefSeq" id="WP_007548610.1">
    <property type="nucleotide sequence ID" value="NZ_MKIF01000050.1"/>
</dbReference>
<dbReference type="SMR" id="C0R3S5"/>
<dbReference type="STRING" id="66084.WRi_008280"/>
<dbReference type="GeneID" id="70036339"/>
<dbReference type="KEGG" id="wri:WRi_008280"/>
<dbReference type="HOGENOM" id="CLU_169643_2_1_5"/>
<dbReference type="Proteomes" id="UP000001293">
    <property type="component" value="Chromosome"/>
</dbReference>
<dbReference type="GO" id="GO:1990904">
    <property type="term" value="C:ribonucleoprotein complex"/>
    <property type="evidence" value="ECO:0007669"/>
    <property type="project" value="UniProtKB-KW"/>
</dbReference>
<dbReference type="GO" id="GO:0005840">
    <property type="term" value="C:ribosome"/>
    <property type="evidence" value="ECO:0007669"/>
    <property type="project" value="UniProtKB-KW"/>
</dbReference>
<dbReference type="GO" id="GO:0003735">
    <property type="term" value="F:structural constituent of ribosome"/>
    <property type="evidence" value="ECO:0007669"/>
    <property type="project" value="InterPro"/>
</dbReference>
<dbReference type="GO" id="GO:0006412">
    <property type="term" value="P:translation"/>
    <property type="evidence" value="ECO:0007669"/>
    <property type="project" value="UniProtKB-UniRule"/>
</dbReference>
<dbReference type="FunFam" id="4.10.410.60:FF:000001">
    <property type="entry name" value="50S ribosomal protein L35"/>
    <property type="match status" value="1"/>
</dbReference>
<dbReference type="Gene3D" id="4.10.410.60">
    <property type="match status" value="1"/>
</dbReference>
<dbReference type="HAMAP" id="MF_00514">
    <property type="entry name" value="Ribosomal_bL35"/>
    <property type="match status" value="1"/>
</dbReference>
<dbReference type="InterPro" id="IPR001706">
    <property type="entry name" value="Ribosomal_bL35"/>
</dbReference>
<dbReference type="InterPro" id="IPR021137">
    <property type="entry name" value="Ribosomal_bL35-like"/>
</dbReference>
<dbReference type="InterPro" id="IPR018265">
    <property type="entry name" value="Ribosomal_bL35_CS"/>
</dbReference>
<dbReference type="InterPro" id="IPR037229">
    <property type="entry name" value="Ribosomal_bL35_sf"/>
</dbReference>
<dbReference type="NCBIfam" id="TIGR00001">
    <property type="entry name" value="rpmI_bact"/>
    <property type="match status" value="1"/>
</dbReference>
<dbReference type="Pfam" id="PF01632">
    <property type="entry name" value="Ribosomal_L35p"/>
    <property type="match status" value="1"/>
</dbReference>
<dbReference type="PRINTS" id="PR00064">
    <property type="entry name" value="RIBOSOMALL35"/>
</dbReference>
<dbReference type="SUPFAM" id="SSF143034">
    <property type="entry name" value="L35p-like"/>
    <property type="match status" value="1"/>
</dbReference>
<dbReference type="PROSITE" id="PS00936">
    <property type="entry name" value="RIBOSOMAL_L35"/>
    <property type="match status" value="1"/>
</dbReference>
<sequence length="68" mass="7705">MKKIKLKTKSSVKKRFHLTAKGKVISTQSGKRHGMVKRSKSNIRNQRGTTILGKSDSRIVKLHMPYGI</sequence>
<feature type="chain" id="PRO_1000194092" description="Large ribosomal subunit protein bL35">
    <location>
        <begin position="1"/>
        <end position="68"/>
    </location>
</feature>
<comment type="similarity">
    <text evidence="1">Belongs to the bacterial ribosomal protein bL35 family.</text>
</comment>
<name>RL35_WOLWR</name>